<name>Y2160_ARCFU</name>
<feature type="chain" id="PRO_0000128105" description="Uncharacterized protein AF_2160">
    <location>
        <begin position="1"/>
        <end position="161"/>
    </location>
</feature>
<feature type="transmembrane region" description="Helical" evidence="1">
    <location>
        <begin position="13"/>
        <end position="35"/>
    </location>
</feature>
<feature type="transmembrane region" description="Helical" evidence="1">
    <location>
        <begin position="40"/>
        <end position="62"/>
    </location>
</feature>
<gene>
    <name type="ordered locus">AF_2160</name>
</gene>
<evidence type="ECO:0000255" key="1"/>
<evidence type="ECO:0000305" key="2"/>
<dbReference type="EMBL" id="AE000782">
    <property type="protein sequence ID" value="AAB89099.1"/>
    <property type="molecule type" value="Genomic_DNA"/>
</dbReference>
<dbReference type="PIR" id="H69519">
    <property type="entry name" value="H69519"/>
</dbReference>
<dbReference type="STRING" id="224325.AF_2160"/>
<dbReference type="PaxDb" id="224325-AF_2160"/>
<dbReference type="EnsemblBacteria" id="AAB89099">
    <property type="protein sequence ID" value="AAB89099"/>
    <property type="gene ID" value="AF_2160"/>
</dbReference>
<dbReference type="KEGG" id="afu:AF_2160"/>
<dbReference type="HOGENOM" id="CLU_1639872_0_0_2"/>
<dbReference type="Proteomes" id="UP000002199">
    <property type="component" value="Chromosome"/>
</dbReference>
<dbReference type="GO" id="GO:0005886">
    <property type="term" value="C:plasma membrane"/>
    <property type="evidence" value="ECO:0007669"/>
    <property type="project" value="UniProtKB-SubCell"/>
</dbReference>
<reference key="1">
    <citation type="journal article" date="1997" name="Nature">
        <title>The complete genome sequence of the hyperthermophilic, sulphate-reducing archaeon Archaeoglobus fulgidus.</title>
        <authorList>
            <person name="Klenk H.-P."/>
            <person name="Clayton R.A."/>
            <person name="Tomb J.-F."/>
            <person name="White O."/>
            <person name="Nelson K.E."/>
            <person name="Ketchum K.A."/>
            <person name="Dodson R.J."/>
            <person name="Gwinn M.L."/>
            <person name="Hickey E.K."/>
            <person name="Peterson J.D."/>
            <person name="Richardson D.L."/>
            <person name="Kerlavage A.R."/>
            <person name="Graham D.E."/>
            <person name="Kyrpides N.C."/>
            <person name="Fleischmann R.D."/>
            <person name="Quackenbush J."/>
            <person name="Lee N.H."/>
            <person name="Sutton G.G."/>
            <person name="Gill S.R."/>
            <person name="Kirkness E.F."/>
            <person name="Dougherty B.A."/>
            <person name="McKenney K."/>
            <person name="Adams M.D."/>
            <person name="Loftus B.J."/>
            <person name="Peterson S.N."/>
            <person name="Reich C.I."/>
            <person name="McNeil L.K."/>
            <person name="Badger J.H."/>
            <person name="Glodek A."/>
            <person name="Zhou L."/>
            <person name="Overbeek R."/>
            <person name="Gocayne J.D."/>
            <person name="Weidman J.F."/>
            <person name="McDonald L.A."/>
            <person name="Utterback T.R."/>
            <person name="Cotton M.D."/>
            <person name="Spriggs T."/>
            <person name="Artiach P."/>
            <person name="Kaine B.P."/>
            <person name="Sykes S.M."/>
            <person name="Sadow P.W."/>
            <person name="D'Andrea K.P."/>
            <person name="Bowman C."/>
            <person name="Fujii C."/>
            <person name="Garland S.A."/>
            <person name="Mason T.M."/>
            <person name="Olsen G.J."/>
            <person name="Fraser C.M."/>
            <person name="Smith H.O."/>
            <person name="Woese C.R."/>
            <person name="Venter J.C."/>
        </authorList>
    </citation>
    <scope>NUCLEOTIDE SEQUENCE [LARGE SCALE GENOMIC DNA]</scope>
    <source>
        <strain>ATCC 49558 / DSM 4304 / JCM 9628 / NBRC 100126 / VC-16</strain>
    </source>
</reference>
<keyword id="KW-1003">Cell membrane</keyword>
<keyword id="KW-0472">Membrane</keyword>
<keyword id="KW-1185">Reference proteome</keyword>
<keyword id="KW-0812">Transmembrane</keyword>
<keyword id="KW-1133">Transmembrane helix</keyword>
<accession>O28122</accession>
<protein>
    <recommendedName>
        <fullName>Uncharacterized protein AF_2160</fullName>
    </recommendedName>
</protein>
<comment type="subcellular location">
    <subcellularLocation>
        <location evidence="2">Cell membrane</location>
        <topology evidence="2">Multi-pass membrane protein</topology>
    </subcellularLocation>
</comment>
<proteinExistence type="predicted"/>
<sequence length="161" mass="17480">MVKSCSVGWGAKVAAVFAALYTSILGLAVLIPHANSAIEVFSAVMAAGLGILIALLAVPFISEITDKTETLEVEVIGEVVVEDSLSFGGANAGLKSERIFVADKGLVIDGYLFEWQKIKFEIEKDEIILRLPSGRRLPIPYSEELAEMLRKSKTSYFIDTK</sequence>
<organism>
    <name type="scientific">Archaeoglobus fulgidus (strain ATCC 49558 / DSM 4304 / JCM 9628 / NBRC 100126 / VC-16)</name>
    <dbReference type="NCBI Taxonomy" id="224325"/>
    <lineage>
        <taxon>Archaea</taxon>
        <taxon>Methanobacteriati</taxon>
        <taxon>Methanobacteriota</taxon>
        <taxon>Archaeoglobi</taxon>
        <taxon>Archaeoglobales</taxon>
        <taxon>Archaeoglobaceae</taxon>
        <taxon>Archaeoglobus</taxon>
    </lineage>
</organism>